<feature type="chain" id="PRO_1000187023" description="2-keto-4-pentenoate hydratase">
    <location>
        <begin position="1"/>
        <end position="269"/>
    </location>
</feature>
<keyword id="KW-0058">Aromatic hydrocarbons catabolism</keyword>
<keyword id="KW-0456">Lyase</keyword>
<name>MHPD_ECO81</name>
<dbReference type="EC" id="4.2.1.80" evidence="1"/>
<dbReference type="EMBL" id="CU928162">
    <property type="protein sequence ID" value="CAR06589.1"/>
    <property type="molecule type" value="Genomic_DNA"/>
</dbReference>
<dbReference type="RefSeq" id="WP_000160740.1">
    <property type="nucleotide sequence ID" value="NC_011745.1"/>
</dbReference>
<dbReference type="SMR" id="B7MPB7"/>
<dbReference type="KEGG" id="ecq:ECED1_0378"/>
<dbReference type="HOGENOM" id="CLU_060136_4_1_6"/>
<dbReference type="UniPathway" id="UPA00714"/>
<dbReference type="Proteomes" id="UP000000748">
    <property type="component" value="Chromosome"/>
</dbReference>
<dbReference type="GO" id="GO:0005737">
    <property type="term" value="C:cytoplasm"/>
    <property type="evidence" value="ECO:0007669"/>
    <property type="project" value="TreeGrafter"/>
</dbReference>
<dbReference type="GO" id="GO:0008684">
    <property type="term" value="F:2-oxopent-4-enoate hydratase activity"/>
    <property type="evidence" value="ECO:0007669"/>
    <property type="project" value="UniProtKB-UniRule"/>
</dbReference>
<dbReference type="GO" id="GO:0030145">
    <property type="term" value="F:manganese ion binding"/>
    <property type="evidence" value="ECO:0007669"/>
    <property type="project" value="InterPro"/>
</dbReference>
<dbReference type="GO" id="GO:0019380">
    <property type="term" value="P:3-phenylpropionate catabolic process"/>
    <property type="evidence" value="ECO:0007669"/>
    <property type="project" value="UniProtKB-UniRule"/>
</dbReference>
<dbReference type="FunFam" id="3.90.850.10:FF:000006">
    <property type="entry name" value="2-keto-4-pentenoate hydratase"/>
    <property type="match status" value="1"/>
</dbReference>
<dbReference type="Gene3D" id="3.90.850.10">
    <property type="entry name" value="Fumarylacetoacetase-like, C-terminal domain"/>
    <property type="match status" value="1"/>
</dbReference>
<dbReference type="HAMAP" id="MF_01655">
    <property type="entry name" value="MhpD"/>
    <property type="match status" value="1"/>
</dbReference>
<dbReference type="InterPro" id="IPR011234">
    <property type="entry name" value="Fumarylacetoacetase-like_C"/>
</dbReference>
<dbReference type="InterPro" id="IPR036663">
    <property type="entry name" value="Fumarylacetoacetase_C_sf"/>
</dbReference>
<dbReference type="InterPro" id="IPR050772">
    <property type="entry name" value="Hydratase-Decarb/MhpD_sf"/>
</dbReference>
<dbReference type="InterPro" id="IPR023793">
    <property type="entry name" value="Keto_pentenoate-hydratase"/>
</dbReference>
<dbReference type="NCBIfam" id="NF008461">
    <property type="entry name" value="PRK11342.1"/>
    <property type="match status" value="1"/>
</dbReference>
<dbReference type="PANTHER" id="PTHR30143:SF0">
    <property type="entry name" value="2-KETO-4-PENTENOATE HYDRATASE"/>
    <property type="match status" value="1"/>
</dbReference>
<dbReference type="PANTHER" id="PTHR30143">
    <property type="entry name" value="ACID HYDRATASE"/>
    <property type="match status" value="1"/>
</dbReference>
<dbReference type="Pfam" id="PF01557">
    <property type="entry name" value="FAA_hydrolase"/>
    <property type="match status" value="1"/>
</dbReference>
<dbReference type="SUPFAM" id="SSF56529">
    <property type="entry name" value="FAH"/>
    <property type="match status" value="1"/>
</dbReference>
<protein>
    <recommendedName>
        <fullName evidence="1">2-keto-4-pentenoate hydratase</fullName>
        <ecNumber evidence="1">4.2.1.80</ecNumber>
    </recommendedName>
    <alternativeName>
        <fullName evidence="1">2-hydroxypentadienoic acid hydratase</fullName>
    </alternativeName>
</protein>
<comment type="function">
    <text evidence="1">Catalyzes the conversion of 2-hydroxypentadienoic acid (enolic form of 2-oxopent-4-enoate) to 4-hydroxy-2-ketopentanoic acid.</text>
</comment>
<comment type="catalytic activity">
    <reaction evidence="1">
        <text>(S)-4-hydroxy-2-oxopentanoate = (2Z)-2-hydroxypenta-2,4-dienoate + H2O</text>
        <dbReference type="Rhea" id="RHEA:22580"/>
        <dbReference type="ChEBI" id="CHEBI:15377"/>
        <dbReference type="ChEBI" id="CHEBI:67152"/>
        <dbReference type="ChEBI" id="CHEBI:73143"/>
        <dbReference type="EC" id="4.2.1.80"/>
    </reaction>
</comment>
<comment type="cofactor">
    <cofactor evidence="1">
        <name>a divalent metal cation</name>
        <dbReference type="ChEBI" id="CHEBI:60240"/>
    </cofactor>
</comment>
<comment type="pathway">
    <text evidence="1">Aromatic compound metabolism; 3-phenylpropanoate degradation.</text>
</comment>
<comment type="similarity">
    <text evidence="1">Belongs to the hydratase/decarboxylase family. MhpD subfamily.</text>
</comment>
<proteinExistence type="inferred from homology"/>
<gene>
    <name evidence="1" type="primary">mhpD</name>
    <name type="ordered locus">ECED1_0378</name>
</gene>
<accession>B7MPB7</accession>
<reference key="1">
    <citation type="journal article" date="2009" name="PLoS Genet.">
        <title>Organised genome dynamics in the Escherichia coli species results in highly diverse adaptive paths.</title>
        <authorList>
            <person name="Touchon M."/>
            <person name="Hoede C."/>
            <person name="Tenaillon O."/>
            <person name="Barbe V."/>
            <person name="Baeriswyl S."/>
            <person name="Bidet P."/>
            <person name="Bingen E."/>
            <person name="Bonacorsi S."/>
            <person name="Bouchier C."/>
            <person name="Bouvet O."/>
            <person name="Calteau A."/>
            <person name="Chiapello H."/>
            <person name="Clermont O."/>
            <person name="Cruveiller S."/>
            <person name="Danchin A."/>
            <person name="Diard M."/>
            <person name="Dossat C."/>
            <person name="Karoui M.E."/>
            <person name="Frapy E."/>
            <person name="Garry L."/>
            <person name="Ghigo J.M."/>
            <person name="Gilles A.M."/>
            <person name="Johnson J."/>
            <person name="Le Bouguenec C."/>
            <person name="Lescat M."/>
            <person name="Mangenot S."/>
            <person name="Martinez-Jehanne V."/>
            <person name="Matic I."/>
            <person name="Nassif X."/>
            <person name="Oztas S."/>
            <person name="Petit M.A."/>
            <person name="Pichon C."/>
            <person name="Rouy Z."/>
            <person name="Ruf C.S."/>
            <person name="Schneider D."/>
            <person name="Tourret J."/>
            <person name="Vacherie B."/>
            <person name="Vallenet D."/>
            <person name="Medigue C."/>
            <person name="Rocha E.P.C."/>
            <person name="Denamur E."/>
        </authorList>
    </citation>
    <scope>NUCLEOTIDE SEQUENCE [LARGE SCALE GENOMIC DNA]</scope>
    <source>
        <strain>ED1a</strain>
    </source>
</reference>
<evidence type="ECO:0000255" key="1">
    <source>
        <dbReference type="HAMAP-Rule" id="MF_01655"/>
    </source>
</evidence>
<sequence>MTKHTLEQLAADLRRAAEQGEAIAPLRDLIGIDNAEAAYVILHINVQYDVAQGRRVVGRKVGLTHPKVQQQLGVDQPDFGTLFADMCYGDNETIPFSRVLQPRIEAEIALVLNRDLPATDITFDELYNAIEWVLPALEVVGSRIRDWSIQFVDTVADNASCGVYVIGGPAQRPAGLDLKNCAMKMTRNNEEVSSGRGSECLGHPLNAAVWLARKMASLGEPLRAGDIILTGALGPMVAVNAGDRFEAHIEGIGSVAATFSSAAPKGSLS</sequence>
<organism>
    <name type="scientific">Escherichia coli O81 (strain ED1a)</name>
    <dbReference type="NCBI Taxonomy" id="585397"/>
    <lineage>
        <taxon>Bacteria</taxon>
        <taxon>Pseudomonadati</taxon>
        <taxon>Pseudomonadota</taxon>
        <taxon>Gammaproteobacteria</taxon>
        <taxon>Enterobacterales</taxon>
        <taxon>Enterobacteriaceae</taxon>
        <taxon>Escherichia</taxon>
    </lineage>
</organism>